<reference key="1">
    <citation type="journal article" date="2004" name="Proc. Natl. Acad. Sci. U.S.A.">
        <title>Complete genomes of two clinical Staphylococcus aureus strains: evidence for the rapid evolution of virulence and drug resistance.</title>
        <authorList>
            <person name="Holden M.T.G."/>
            <person name="Feil E.J."/>
            <person name="Lindsay J.A."/>
            <person name="Peacock S.J."/>
            <person name="Day N.P.J."/>
            <person name="Enright M.C."/>
            <person name="Foster T.J."/>
            <person name="Moore C.E."/>
            <person name="Hurst L."/>
            <person name="Atkin R."/>
            <person name="Barron A."/>
            <person name="Bason N."/>
            <person name="Bentley S.D."/>
            <person name="Chillingworth C."/>
            <person name="Chillingworth T."/>
            <person name="Churcher C."/>
            <person name="Clark L."/>
            <person name="Corton C."/>
            <person name="Cronin A."/>
            <person name="Doggett J."/>
            <person name="Dowd L."/>
            <person name="Feltwell T."/>
            <person name="Hance Z."/>
            <person name="Harris B."/>
            <person name="Hauser H."/>
            <person name="Holroyd S."/>
            <person name="Jagels K."/>
            <person name="James K.D."/>
            <person name="Lennard N."/>
            <person name="Line A."/>
            <person name="Mayes R."/>
            <person name="Moule S."/>
            <person name="Mungall K."/>
            <person name="Ormond D."/>
            <person name="Quail M.A."/>
            <person name="Rabbinowitsch E."/>
            <person name="Rutherford K.M."/>
            <person name="Sanders M."/>
            <person name="Sharp S."/>
            <person name="Simmonds M."/>
            <person name="Stevens K."/>
            <person name="Whitehead S."/>
            <person name="Barrell B.G."/>
            <person name="Spratt B.G."/>
            <person name="Parkhill J."/>
        </authorList>
    </citation>
    <scope>NUCLEOTIDE SEQUENCE [LARGE SCALE GENOMIC DNA]</scope>
    <source>
        <strain>MSSA476</strain>
    </source>
</reference>
<keyword id="KW-0687">Ribonucleoprotein</keyword>
<keyword id="KW-0689">Ribosomal protein</keyword>
<keyword id="KW-0694">RNA-binding</keyword>
<keyword id="KW-0699">rRNA-binding</keyword>
<keyword id="KW-0820">tRNA-binding</keyword>
<dbReference type="EMBL" id="BX571857">
    <property type="protein sequence ID" value="CAG43945.1"/>
    <property type="molecule type" value="Genomic_DNA"/>
</dbReference>
<dbReference type="RefSeq" id="WP_000926310.1">
    <property type="nucleotide sequence ID" value="NC_002953.3"/>
</dbReference>
<dbReference type="SMR" id="Q6G778"/>
<dbReference type="GeneID" id="98346555"/>
<dbReference type="KEGG" id="sas:SAS2134"/>
<dbReference type="HOGENOM" id="CLU_078858_2_1_9"/>
<dbReference type="GO" id="GO:0022625">
    <property type="term" value="C:cytosolic large ribosomal subunit"/>
    <property type="evidence" value="ECO:0007669"/>
    <property type="project" value="TreeGrafter"/>
</dbReference>
<dbReference type="GO" id="GO:0019843">
    <property type="term" value="F:rRNA binding"/>
    <property type="evidence" value="ECO:0007669"/>
    <property type="project" value="UniProtKB-UniRule"/>
</dbReference>
<dbReference type="GO" id="GO:0003735">
    <property type="term" value="F:structural constituent of ribosome"/>
    <property type="evidence" value="ECO:0007669"/>
    <property type="project" value="InterPro"/>
</dbReference>
<dbReference type="GO" id="GO:0000049">
    <property type="term" value="F:tRNA binding"/>
    <property type="evidence" value="ECO:0007669"/>
    <property type="project" value="UniProtKB-KW"/>
</dbReference>
<dbReference type="GO" id="GO:0006412">
    <property type="term" value="P:translation"/>
    <property type="evidence" value="ECO:0007669"/>
    <property type="project" value="UniProtKB-UniRule"/>
</dbReference>
<dbReference type="CDD" id="cd01433">
    <property type="entry name" value="Ribosomal_L16_L10e"/>
    <property type="match status" value="1"/>
</dbReference>
<dbReference type="FunFam" id="3.90.1170.10:FF:000001">
    <property type="entry name" value="50S ribosomal protein L16"/>
    <property type="match status" value="1"/>
</dbReference>
<dbReference type="Gene3D" id="3.90.1170.10">
    <property type="entry name" value="Ribosomal protein L10e/L16"/>
    <property type="match status" value="1"/>
</dbReference>
<dbReference type="HAMAP" id="MF_01342">
    <property type="entry name" value="Ribosomal_uL16"/>
    <property type="match status" value="1"/>
</dbReference>
<dbReference type="InterPro" id="IPR047873">
    <property type="entry name" value="Ribosomal_uL16"/>
</dbReference>
<dbReference type="InterPro" id="IPR000114">
    <property type="entry name" value="Ribosomal_uL16_bact-type"/>
</dbReference>
<dbReference type="InterPro" id="IPR020798">
    <property type="entry name" value="Ribosomal_uL16_CS"/>
</dbReference>
<dbReference type="InterPro" id="IPR016180">
    <property type="entry name" value="Ribosomal_uL16_dom"/>
</dbReference>
<dbReference type="InterPro" id="IPR036920">
    <property type="entry name" value="Ribosomal_uL16_sf"/>
</dbReference>
<dbReference type="NCBIfam" id="TIGR01164">
    <property type="entry name" value="rplP_bact"/>
    <property type="match status" value="1"/>
</dbReference>
<dbReference type="PANTHER" id="PTHR12220">
    <property type="entry name" value="50S/60S RIBOSOMAL PROTEIN L16"/>
    <property type="match status" value="1"/>
</dbReference>
<dbReference type="PANTHER" id="PTHR12220:SF13">
    <property type="entry name" value="LARGE RIBOSOMAL SUBUNIT PROTEIN UL16M"/>
    <property type="match status" value="1"/>
</dbReference>
<dbReference type="Pfam" id="PF00252">
    <property type="entry name" value="Ribosomal_L16"/>
    <property type="match status" value="1"/>
</dbReference>
<dbReference type="PRINTS" id="PR00060">
    <property type="entry name" value="RIBOSOMALL16"/>
</dbReference>
<dbReference type="SUPFAM" id="SSF54686">
    <property type="entry name" value="Ribosomal protein L16p/L10e"/>
    <property type="match status" value="1"/>
</dbReference>
<dbReference type="PROSITE" id="PS00586">
    <property type="entry name" value="RIBOSOMAL_L16_1"/>
    <property type="match status" value="1"/>
</dbReference>
<dbReference type="PROSITE" id="PS00701">
    <property type="entry name" value="RIBOSOMAL_L16_2"/>
    <property type="match status" value="1"/>
</dbReference>
<protein>
    <recommendedName>
        <fullName evidence="1">Large ribosomal subunit protein uL16</fullName>
    </recommendedName>
    <alternativeName>
        <fullName evidence="3">50S ribosomal protein L16</fullName>
    </alternativeName>
</protein>
<gene>
    <name evidence="1" type="primary">rplP</name>
    <name type="ordered locus">SAS2134</name>
</gene>
<evidence type="ECO:0000255" key="1">
    <source>
        <dbReference type="HAMAP-Rule" id="MF_01342"/>
    </source>
</evidence>
<evidence type="ECO:0000256" key="2">
    <source>
        <dbReference type="SAM" id="MobiDB-lite"/>
    </source>
</evidence>
<evidence type="ECO:0000305" key="3"/>
<accession>Q6G778</accession>
<comment type="function">
    <text evidence="1">Binds 23S rRNA and is also seen to make contacts with the A and possibly P site tRNAs.</text>
</comment>
<comment type="subunit">
    <text evidence="1">Part of the 50S ribosomal subunit.</text>
</comment>
<comment type="similarity">
    <text evidence="1">Belongs to the universal ribosomal protein uL16 family.</text>
</comment>
<feature type="chain" id="PRO_0000062205" description="Large ribosomal subunit protein uL16">
    <location>
        <begin position="1"/>
        <end position="144"/>
    </location>
</feature>
<feature type="region of interest" description="Disordered" evidence="2">
    <location>
        <begin position="1"/>
        <end position="23"/>
    </location>
</feature>
<feature type="compositionally biased region" description="Basic residues" evidence="2">
    <location>
        <begin position="1"/>
        <end position="19"/>
    </location>
</feature>
<sequence>MLLPKRVKYRRQHRPKTTGRSKGGNYVTFGEFGLQATTTSWITSRQIESARIAMTRYMKRGGKVWIKIFPHTPYTKKPLEVRMGAGKGAVEGWIAVVKPGRILFEVAGVSEEVAREALRLASHKLPVKTKFVKREELGGETNES</sequence>
<proteinExistence type="inferred from homology"/>
<name>RL16_STAAS</name>
<organism>
    <name type="scientific">Staphylococcus aureus (strain MSSA476)</name>
    <dbReference type="NCBI Taxonomy" id="282459"/>
    <lineage>
        <taxon>Bacteria</taxon>
        <taxon>Bacillati</taxon>
        <taxon>Bacillota</taxon>
        <taxon>Bacilli</taxon>
        <taxon>Bacillales</taxon>
        <taxon>Staphylococcaceae</taxon>
        <taxon>Staphylococcus</taxon>
    </lineage>
</organism>